<name>INS_LOPAM</name>
<feature type="signal peptide">
    <location>
        <begin position="1"/>
        <end position="24"/>
    </location>
</feature>
<feature type="peptide" id="PRO_0000015832" description="Insulin B chain">
    <location>
        <begin position="25"/>
        <end position="53"/>
    </location>
</feature>
<feature type="propeptide" id="PRO_0000015833" description="C peptide">
    <location>
        <begin position="56"/>
        <end position="93"/>
    </location>
</feature>
<feature type="peptide" id="PRO_0000015834" description="Insulin A chain">
    <location>
        <begin position="96"/>
        <end position="116"/>
    </location>
</feature>
<feature type="disulfide bond" description="Interchain (between B and A chains)" evidence="1">
    <location>
        <begin position="32"/>
        <end position="102"/>
    </location>
</feature>
<feature type="disulfide bond" description="Interchain (between B and A chains)" evidence="1">
    <location>
        <begin position="44"/>
        <end position="115"/>
    </location>
</feature>
<feature type="disulfide bond" evidence="1">
    <location>
        <begin position="101"/>
        <end position="106"/>
    </location>
</feature>
<keyword id="KW-0119">Carbohydrate metabolism</keyword>
<keyword id="KW-0165">Cleavage on pair of basic residues</keyword>
<keyword id="KW-1015">Disulfide bond</keyword>
<keyword id="KW-0313">Glucose metabolism</keyword>
<keyword id="KW-0372">Hormone</keyword>
<keyword id="KW-0964">Secreted</keyword>
<keyword id="KW-0732">Signal</keyword>
<proteinExistence type="inferred from homology"/>
<reference key="1">
    <citation type="journal article" date="1980" name="Science">
        <title>Comparison of the nucleic acid sequence of anglerfish and mammalian insulin mRNA's from cloned cDNA's.</title>
        <authorList>
            <person name="Hobart P.M."/>
            <person name="Shen L.-P."/>
            <person name="Crawford R."/>
            <person name="Pictet R.L."/>
            <person name="Rutter W.J."/>
        </authorList>
    </citation>
    <scope>NUCLEOTIDE SEQUENCE [MRNA]</scope>
</reference>
<accession>P69045</accession>
<accession>P01341</accession>
<organism>
    <name type="scientific">Lophius americanus</name>
    <name type="common">American angler</name>
    <name type="synonym">Anglerfish</name>
    <dbReference type="NCBI Taxonomy" id="8073"/>
    <lineage>
        <taxon>Eukaryota</taxon>
        <taxon>Metazoa</taxon>
        <taxon>Chordata</taxon>
        <taxon>Craniata</taxon>
        <taxon>Vertebrata</taxon>
        <taxon>Euteleostomi</taxon>
        <taxon>Actinopterygii</taxon>
        <taxon>Neopterygii</taxon>
        <taxon>Teleostei</taxon>
        <taxon>Neoteleostei</taxon>
        <taxon>Acanthomorphata</taxon>
        <taxon>Eupercaria</taxon>
        <taxon>Lophiiformes</taxon>
        <taxon>Lophiidae</taxon>
        <taxon>Lophius</taxon>
    </lineage>
</organism>
<evidence type="ECO:0000250" key="1"/>
<evidence type="ECO:0000305" key="2"/>
<gene>
    <name type="primary">ins</name>
</gene>
<comment type="function">
    <text>Insulin decreases blood glucose concentration. It increases cell permeability to monosaccharides, amino acids and fatty acids. It accelerates glycolysis, the pentose phosphate cycle, and glycogen synthesis in liver.</text>
</comment>
<comment type="subunit">
    <text>Heterodimer of a B chain and an A chain linked by two disulfide bonds.</text>
</comment>
<comment type="subcellular location">
    <subcellularLocation>
        <location>Secreted</location>
    </subcellularLocation>
</comment>
<comment type="similarity">
    <text evidence="2">Belongs to the insulin family.</text>
</comment>
<dbReference type="EMBL" id="V00634">
    <property type="protein sequence ID" value="CAA23907.1"/>
    <property type="molecule type" value="mRNA"/>
</dbReference>
<dbReference type="PIR" id="A01608">
    <property type="entry name" value="IPAF"/>
</dbReference>
<dbReference type="SMR" id="P69045"/>
<dbReference type="GO" id="GO:0005615">
    <property type="term" value="C:extracellular space"/>
    <property type="evidence" value="ECO:0007669"/>
    <property type="project" value="TreeGrafter"/>
</dbReference>
<dbReference type="GO" id="GO:0005179">
    <property type="term" value="F:hormone activity"/>
    <property type="evidence" value="ECO:0007669"/>
    <property type="project" value="UniProtKB-KW"/>
</dbReference>
<dbReference type="GO" id="GO:0006006">
    <property type="term" value="P:glucose metabolic process"/>
    <property type="evidence" value="ECO:0007669"/>
    <property type="project" value="UniProtKB-KW"/>
</dbReference>
<dbReference type="CDD" id="cd04367">
    <property type="entry name" value="IlGF_insulin_like"/>
    <property type="match status" value="1"/>
</dbReference>
<dbReference type="FunFam" id="1.10.100.10:FF:000003">
    <property type="entry name" value="Insulin"/>
    <property type="match status" value="1"/>
</dbReference>
<dbReference type="Gene3D" id="1.10.100.10">
    <property type="entry name" value="Insulin-like"/>
    <property type="match status" value="1"/>
</dbReference>
<dbReference type="InterPro" id="IPR004825">
    <property type="entry name" value="Insulin"/>
</dbReference>
<dbReference type="InterPro" id="IPR016179">
    <property type="entry name" value="Insulin-like"/>
</dbReference>
<dbReference type="InterPro" id="IPR036438">
    <property type="entry name" value="Insulin-like_sf"/>
</dbReference>
<dbReference type="InterPro" id="IPR022353">
    <property type="entry name" value="Insulin_CS"/>
</dbReference>
<dbReference type="InterPro" id="IPR022352">
    <property type="entry name" value="Insulin_family"/>
</dbReference>
<dbReference type="PANTHER" id="PTHR11454:SF9">
    <property type="entry name" value="INSULIN"/>
    <property type="match status" value="1"/>
</dbReference>
<dbReference type="PANTHER" id="PTHR11454">
    <property type="entry name" value="INSULIN/INSULIN GROWTH FACTOR"/>
    <property type="match status" value="1"/>
</dbReference>
<dbReference type="Pfam" id="PF00049">
    <property type="entry name" value="Insulin"/>
    <property type="match status" value="1"/>
</dbReference>
<dbReference type="PRINTS" id="PR00277">
    <property type="entry name" value="INSULIN"/>
</dbReference>
<dbReference type="PRINTS" id="PR00276">
    <property type="entry name" value="INSULINFAMLY"/>
</dbReference>
<dbReference type="SMART" id="SM00078">
    <property type="entry name" value="IlGF"/>
    <property type="match status" value="1"/>
</dbReference>
<dbReference type="SUPFAM" id="SSF56994">
    <property type="entry name" value="Insulin-like"/>
    <property type="match status" value="1"/>
</dbReference>
<dbReference type="PROSITE" id="PS00262">
    <property type="entry name" value="INSULIN"/>
    <property type="match status" value="1"/>
</dbReference>
<sequence>MAALWLQSFSLLVLLVVSWPGSQAVAPAQHLCGSHLVDALYLVCGDRGFFYNPKRDVDQLLGFLPPKSGGAAAAGADNEVAEFAFKDQMEMMVKRGIVEQCCHRPCNIFDLQNYCN</sequence>
<protein>
    <recommendedName>
        <fullName>Insulin</fullName>
    </recommendedName>
    <component>
        <recommendedName>
            <fullName>Insulin B chain</fullName>
        </recommendedName>
    </component>
    <component>
        <recommendedName>
            <fullName>Insulin A chain</fullName>
        </recommendedName>
    </component>
</protein>